<sequence length="151" mass="15760">MMALLQRVTRARVTVDGATTGEIGTGLLALVCAEQGDTEAEADKLLAKLLKLRVFADEGGRMNRSLQEVGGGLLVVSQFTLAADTSGGNRPSFANAAPADTGRALYEHFVARARAQHGEVATGRFGAMMQVELVNDGPVTIPLRIPPASAA</sequence>
<organism>
    <name type="scientific">Azoarcus sp. (strain BH72)</name>
    <dbReference type="NCBI Taxonomy" id="418699"/>
    <lineage>
        <taxon>Bacteria</taxon>
        <taxon>Pseudomonadati</taxon>
        <taxon>Pseudomonadota</taxon>
        <taxon>Betaproteobacteria</taxon>
        <taxon>Rhodocyclales</taxon>
        <taxon>Zoogloeaceae</taxon>
        <taxon>Azoarcus</taxon>
    </lineage>
</organism>
<comment type="function">
    <text evidence="1">An aminoacyl-tRNA editing enzyme that deacylates mischarged D-aminoacyl-tRNAs. Also deacylates mischarged glycyl-tRNA(Ala), protecting cells against glycine mischarging by AlaRS. Acts via tRNA-based rather than protein-based catalysis; rejects L-amino acids rather than detecting D-amino acids in the active site. By recycling D-aminoacyl-tRNA to D-amino acids and free tRNA molecules, this enzyme counteracts the toxicity associated with the formation of D-aminoacyl-tRNA entities in vivo and helps enforce protein L-homochirality.</text>
</comment>
<comment type="catalytic activity">
    <reaction evidence="1">
        <text>glycyl-tRNA(Ala) + H2O = tRNA(Ala) + glycine + H(+)</text>
        <dbReference type="Rhea" id="RHEA:53744"/>
        <dbReference type="Rhea" id="RHEA-COMP:9657"/>
        <dbReference type="Rhea" id="RHEA-COMP:13640"/>
        <dbReference type="ChEBI" id="CHEBI:15377"/>
        <dbReference type="ChEBI" id="CHEBI:15378"/>
        <dbReference type="ChEBI" id="CHEBI:57305"/>
        <dbReference type="ChEBI" id="CHEBI:78442"/>
        <dbReference type="ChEBI" id="CHEBI:78522"/>
        <dbReference type="EC" id="3.1.1.96"/>
    </reaction>
</comment>
<comment type="catalytic activity">
    <reaction evidence="1">
        <text>a D-aminoacyl-tRNA + H2O = a tRNA + a D-alpha-amino acid + H(+)</text>
        <dbReference type="Rhea" id="RHEA:13953"/>
        <dbReference type="Rhea" id="RHEA-COMP:10123"/>
        <dbReference type="Rhea" id="RHEA-COMP:10124"/>
        <dbReference type="ChEBI" id="CHEBI:15377"/>
        <dbReference type="ChEBI" id="CHEBI:15378"/>
        <dbReference type="ChEBI" id="CHEBI:59871"/>
        <dbReference type="ChEBI" id="CHEBI:78442"/>
        <dbReference type="ChEBI" id="CHEBI:79333"/>
        <dbReference type="EC" id="3.1.1.96"/>
    </reaction>
</comment>
<comment type="subunit">
    <text evidence="1">Homodimer.</text>
</comment>
<comment type="subcellular location">
    <subcellularLocation>
        <location evidence="1">Cytoplasm</location>
    </subcellularLocation>
</comment>
<comment type="domain">
    <text evidence="1">A Gly-cisPro motif from one monomer fits into the active site of the other monomer to allow specific chiral rejection of L-amino acids.</text>
</comment>
<comment type="similarity">
    <text evidence="1">Belongs to the DTD family.</text>
</comment>
<dbReference type="EC" id="3.1.1.96" evidence="1"/>
<dbReference type="EMBL" id="AM406670">
    <property type="protein sequence ID" value="CAL92727.1"/>
    <property type="molecule type" value="Genomic_DNA"/>
</dbReference>
<dbReference type="RefSeq" id="WP_011763846.1">
    <property type="nucleotide sequence ID" value="NC_008702.1"/>
</dbReference>
<dbReference type="SMR" id="A1K1M2"/>
<dbReference type="STRING" id="62928.azo0109"/>
<dbReference type="KEGG" id="azo:azo0109"/>
<dbReference type="eggNOG" id="COG1490">
    <property type="taxonomic scope" value="Bacteria"/>
</dbReference>
<dbReference type="HOGENOM" id="CLU_076901_1_1_4"/>
<dbReference type="Proteomes" id="UP000002588">
    <property type="component" value="Chromosome"/>
</dbReference>
<dbReference type="GO" id="GO:0005737">
    <property type="term" value="C:cytoplasm"/>
    <property type="evidence" value="ECO:0007669"/>
    <property type="project" value="UniProtKB-SubCell"/>
</dbReference>
<dbReference type="GO" id="GO:0051500">
    <property type="term" value="F:D-tyrosyl-tRNA(Tyr) deacylase activity"/>
    <property type="evidence" value="ECO:0007669"/>
    <property type="project" value="TreeGrafter"/>
</dbReference>
<dbReference type="GO" id="GO:0106026">
    <property type="term" value="F:Gly-tRNA(Ala) deacylase activity"/>
    <property type="evidence" value="ECO:0007669"/>
    <property type="project" value="UniProtKB-UniRule"/>
</dbReference>
<dbReference type="GO" id="GO:0043908">
    <property type="term" value="F:Ser(Gly)-tRNA(Ala) hydrolase activity"/>
    <property type="evidence" value="ECO:0007669"/>
    <property type="project" value="UniProtKB-UniRule"/>
</dbReference>
<dbReference type="GO" id="GO:0000049">
    <property type="term" value="F:tRNA binding"/>
    <property type="evidence" value="ECO:0007669"/>
    <property type="project" value="UniProtKB-UniRule"/>
</dbReference>
<dbReference type="GO" id="GO:0019478">
    <property type="term" value="P:D-amino acid catabolic process"/>
    <property type="evidence" value="ECO:0007669"/>
    <property type="project" value="UniProtKB-UniRule"/>
</dbReference>
<dbReference type="FunFam" id="3.50.80.10:FF:000001">
    <property type="entry name" value="D-aminoacyl-tRNA deacylase"/>
    <property type="match status" value="1"/>
</dbReference>
<dbReference type="Gene3D" id="3.50.80.10">
    <property type="entry name" value="D-tyrosyl-tRNA(Tyr) deacylase"/>
    <property type="match status" value="1"/>
</dbReference>
<dbReference type="HAMAP" id="MF_00518">
    <property type="entry name" value="Deacylase_Dtd"/>
    <property type="match status" value="1"/>
</dbReference>
<dbReference type="InterPro" id="IPR003732">
    <property type="entry name" value="Daa-tRNA_deacyls_DTD"/>
</dbReference>
<dbReference type="InterPro" id="IPR023509">
    <property type="entry name" value="DTD-like_sf"/>
</dbReference>
<dbReference type="NCBIfam" id="TIGR00256">
    <property type="entry name" value="D-aminoacyl-tRNA deacylase"/>
    <property type="match status" value="1"/>
</dbReference>
<dbReference type="PANTHER" id="PTHR10472:SF5">
    <property type="entry name" value="D-AMINOACYL-TRNA DEACYLASE 1"/>
    <property type="match status" value="1"/>
</dbReference>
<dbReference type="PANTHER" id="PTHR10472">
    <property type="entry name" value="D-TYROSYL-TRNA TYR DEACYLASE"/>
    <property type="match status" value="1"/>
</dbReference>
<dbReference type="Pfam" id="PF02580">
    <property type="entry name" value="Tyr_Deacylase"/>
    <property type="match status" value="1"/>
</dbReference>
<dbReference type="SUPFAM" id="SSF69500">
    <property type="entry name" value="DTD-like"/>
    <property type="match status" value="1"/>
</dbReference>
<reference key="1">
    <citation type="journal article" date="2006" name="Nat. Biotechnol.">
        <title>Complete genome of the mutualistic, N2-fixing grass endophyte Azoarcus sp. strain BH72.</title>
        <authorList>
            <person name="Krause A."/>
            <person name="Ramakumar A."/>
            <person name="Bartels D."/>
            <person name="Battistoni F."/>
            <person name="Bekel T."/>
            <person name="Boch J."/>
            <person name="Boehm M."/>
            <person name="Friedrich F."/>
            <person name="Hurek T."/>
            <person name="Krause L."/>
            <person name="Linke B."/>
            <person name="McHardy A.C."/>
            <person name="Sarkar A."/>
            <person name="Schneiker S."/>
            <person name="Syed A.A."/>
            <person name="Thauer R."/>
            <person name="Vorhoelter F.-J."/>
            <person name="Weidner S."/>
            <person name="Puehler A."/>
            <person name="Reinhold-Hurek B."/>
            <person name="Kaiser O."/>
            <person name="Goesmann A."/>
        </authorList>
    </citation>
    <scope>NUCLEOTIDE SEQUENCE [LARGE SCALE GENOMIC DNA]</scope>
    <source>
        <strain>BH72</strain>
    </source>
</reference>
<name>DTD_AZOSB</name>
<evidence type="ECO:0000255" key="1">
    <source>
        <dbReference type="HAMAP-Rule" id="MF_00518"/>
    </source>
</evidence>
<feature type="chain" id="PRO_1000050810" description="D-aminoacyl-tRNA deacylase">
    <location>
        <begin position="1"/>
        <end position="151"/>
    </location>
</feature>
<feature type="short sequence motif" description="Gly-cisPro motif, important for rejection of L-amino acids" evidence="1">
    <location>
        <begin position="137"/>
        <end position="138"/>
    </location>
</feature>
<accession>A1K1M2</accession>
<keyword id="KW-0963">Cytoplasm</keyword>
<keyword id="KW-0378">Hydrolase</keyword>
<keyword id="KW-1185">Reference proteome</keyword>
<keyword id="KW-0694">RNA-binding</keyword>
<keyword id="KW-0820">tRNA-binding</keyword>
<gene>
    <name evidence="1" type="primary">dtd</name>
    <name type="ordered locus">azo0109</name>
</gene>
<proteinExistence type="inferred from homology"/>
<protein>
    <recommendedName>
        <fullName evidence="1">D-aminoacyl-tRNA deacylase</fullName>
        <shortName evidence="1">DTD</shortName>
        <ecNumber evidence="1">3.1.1.96</ecNumber>
    </recommendedName>
    <alternativeName>
        <fullName evidence="1">Gly-tRNA(Ala) deacylase</fullName>
    </alternativeName>
</protein>